<accession>A8H786</accession>
<organism>
    <name type="scientific">Shewanella pealeana (strain ATCC 700345 / ANG-SQ1)</name>
    <dbReference type="NCBI Taxonomy" id="398579"/>
    <lineage>
        <taxon>Bacteria</taxon>
        <taxon>Pseudomonadati</taxon>
        <taxon>Pseudomonadota</taxon>
        <taxon>Gammaproteobacteria</taxon>
        <taxon>Alteromonadales</taxon>
        <taxon>Shewanellaceae</taxon>
        <taxon>Shewanella</taxon>
    </lineage>
</organism>
<gene>
    <name evidence="1" type="primary">rlmG</name>
    <name type="ordered locus">Spea_3107</name>
</gene>
<evidence type="ECO:0000255" key="1">
    <source>
        <dbReference type="HAMAP-Rule" id="MF_01859"/>
    </source>
</evidence>
<evidence type="ECO:0000256" key="2">
    <source>
        <dbReference type="SAM" id="MobiDB-lite"/>
    </source>
</evidence>
<evidence type="ECO:0000305" key="3"/>
<proteinExistence type="inferred from homology"/>
<protein>
    <recommendedName>
        <fullName evidence="1">Ribosomal RNA large subunit methyltransferase G</fullName>
        <ecNumber evidence="1">2.1.1.174</ecNumber>
    </recommendedName>
    <alternativeName>
        <fullName evidence="1">23S rRNA m2G1835 methyltransferase</fullName>
    </alternativeName>
    <alternativeName>
        <fullName evidence="1">rRNA (guanine-N(2)-)-methyltransferase RlmG</fullName>
    </alternativeName>
</protein>
<comment type="function">
    <text evidence="1">Specifically methylates the guanine in position 1835 (m2G1835) of 23S rRNA.</text>
</comment>
<comment type="catalytic activity">
    <reaction evidence="1">
        <text>guanosine(1835) in 23S rRNA + S-adenosyl-L-methionine = N(2)-methylguanosine(1835) in 23S rRNA + S-adenosyl-L-homocysteine + H(+)</text>
        <dbReference type="Rhea" id="RHEA:42744"/>
        <dbReference type="Rhea" id="RHEA-COMP:10217"/>
        <dbReference type="Rhea" id="RHEA-COMP:10218"/>
        <dbReference type="ChEBI" id="CHEBI:15378"/>
        <dbReference type="ChEBI" id="CHEBI:57856"/>
        <dbReference type="ChEBI" id="CHEBI:59789"/>
        <dbReference type="ChEBI" id="CHEBI:74269"/>
        <dbReference type="ChEBI" id="CHEBI:74481"/>
        <dbReference type="EC" id="2.1.1.174"/>
    </reaction>
</comment>
<comment type="subcellular location">
    <subcellularLocation>
        <location evidence="1">Cytoplasm</location>
    </subcellularLocation>
</comment>
<comment type="similarity">
    <text evidence="1">Belongs to the methyltransferase superfamily. RlmG family.</text>
</comment>
<comment type="sequence caution" evidence="3">
    <conflict type="erroneous initiation">
        <sequence resource="EMBL-CDS" id="ABV88423"/>
    </conflict>
</comment>
<keyword id="KW-0963">Cytoplasm</keyword>
<keyword id="KW-0489">Methyltransferase</keyword>
<keyword id="KW-1185">Reference proteome</keyword>
<keyword id="KW-0698">rRNA processing</keyword>
<keyword id="KW-0949">S-adenosyl-L-methionine</keyword>
<keyword id="KW-0808">Transferase</keyword>
<reference key="1">
    <citation type="submission" date="2007-10" db="EMBL/GenBank/DDBJ databases">
        <title>Complete sequence of Shewanella pealeana ATCC 700345.</title>
        <authorList>
            <consortium name="US DOE Joint Genome Institute"/>
            <person name="Copeland A."/>
            <person name="Lucas S."/>
            <person name="Lapidus A."/>
            <person name="Barry K."/>
            <person name="Glavina del Rio T."/>
            <person name="Dalin E."/>
            <person name="Tice H."/>
            <person name="Pitluck S."/>
            <person name="Chertkov O."/>
            <person name="Brettin T."/>
            <person name="Bruce D."/>
            <person name="Detter J.C."/>
            <person name="Han C."/>
            <person name="Schmutz J."/>
            <person name="Larimer F."/>
            <person name="Land M."/>
            <person name="Hauser L."/>
            <person name="Kyrpides N."/>
            <person name="Kim E."/>
            <person name="Zhao J.-S.Z."/>
            <person name="Manno D."/>
            <person name="Hawari J."/>
            <person name="Richardson P."/>
        </authorList>
    </citation>
    <scope>NUCLEOTIDE SEQUENCE [LARGE SCALE GENOMIC DNA]</scope>
    <source>
        <strain>ATCC 700345 / ANG-SQ1</strain>
    </source>
</reference>
<sequence>MTTQFSVSGIELELFRYPSRQESNLQAWDAADEHLIKHLIDTEQTSISTAVVNDGFGALTAGLLSINPSWPLTLETDAKTSQLGTSQNLTRNQLSQESITWVNSRDELPQVIELVLMKLPKNLNYFSHQLNRLSHVLPAGTQVLIGAKAKSINKSLLETIEKNLGPASASLTWKKTRVITCIADGKARALPKATTWSVPEFKLQISNLSNVFAANKLDIGARIMLDNMPKGDYKSIVDLGCGNGILGLHAKQVFPEAYIHFIDDSEMAVASARENWALNKLDNPALVGEQATFGWDDCLTNMSEGFRPDLVLCNPPFHQGEAITDHIAWQMFLDAFRRLKNGGILHVVGNRHLAYHVKLQRIFKNCTTVASNGKFVILQAQKISKKAQEAEVEQAFDTETPHPQSALYGKPKA</sequence>
<dbReference type="EC" id="2.1.1.174" evidence="1"/>
<dbReference type="EMBL" id="CP000851">
    <property type="protein sequence ID" value="ABV88423.1"/>
    <property type="status" value="ALT_INIT"/>
    <property type="molecule type" value="Genomic_DNA"/>
</dbReference>
<dbReference type="RefSeq" id="WP_041411585.1">
    <property type="nucleotide sequence ID" value="NC_009901.1"/>
</dbReference>
<dbReference type="SMR" id="A8H786"/>
<dbReference type="STRING" id="398579.Spea_3107"/>
<dbReference type="KEGG" id="spl:Spea_3107"/>
<dbReference type="eggNOG" id="COG2813">
    <property type="taxonomic scope" value="Bacteria"/>
</dbReference>
<dbReference type="HOGENOM" id="CLU_040288_4_0_6"/>
<dbReference type="Proteomes" id="UP000002608">
    <property type="component" value="Chromosome"/>
</dbReference>
<dbReference type="GO" id="GO:0005737">
    <property type="term" value="C:cytoplasm"/>
    <property type="evidence" value="ECO:0007669"/>
    <property type="project" value="UniProtKB-SubCell"/>
</dbReference>
<dbReference type="GO" id="GO:0052916">
    <property type="term" value="F:23S rRNA (guanine(1835)-N(2))-methyltransferase activity"/>
    <property type="evidence" value="ECO:0007669"/>
    <property type="project" value="UniProtKB-EC"/>
</dbReference>
<dbReference type="GO" id="GO:0003676">
    <property type="term" value="F:nucleic acid binding"/>
    <property type="evidence" value="ECO:0007669"/>
    <property type="project" value="InterPro"/>
</dbReference>
<dbReference type="CDD" id="cd02440">
    <property type="entry name" value="AdoMet_MTases"/>
    <property type="match status" value="1"/>
</dbReference>
<dbReference type="Gene3D" id="3.40.50.150">
    <property type="entry name" value="Vaccinia Virus protein VP39"/>
    <property type="match status" value="2"/>
</dbReference>
<dbReference type="HAMAP" id="MF_01859">
    <property type="entry name" value="23SrRNA_methyltr_G"/>
    <property type="match status" value="1"/>
</dbReference>
<dbReference type="InterPro" id="IPR002052">
    <property type="entry name" value="DNA_methylase_N6_adenine_CS"/>
</dbReference>
<dbReference type="InterPro" id="IPR017237">
    <property type="entry name" value="rRNA_m2G-MeTrfase_RlmG"/>
</dbReference>
<dbReference type="InterPro" id="IPR046977">
    <property type="entry name" value="RsmC/RlmG"/>
</dbReference>
<dbReference type="InterPro" id="IPR029063">
    <property type="entry name" value="SAM-dependent_MTases_sf"/>
</dbReference>
<dbReference type="InterPro" id="IPR007848">
    <property type="entry name" value="Small_mtfrase_dom"/>
</dbReference>
<dbReference type="PANTHER" id="PTHR47816:SF5">
    <property type="entry name" value="RIBOSOMAL RNA LARGE SUBUNIT METHYLTRANSFERASE G"/>
    <property type="match status" value="1"/>
</dbReference>
<dbReference type="PANTHER" id="PTHR47816">
    <property type="entry name" value="RIBOSOMAL RNA SMALL SUBUNIT METHYLTRANSFERASE C"/>
    <property type="match status" value="1"/>
</dbReference>
<dbReference type="Pfam" id="PF05175">
    <property type="entry name" value="MTS"/>
    <property type="match status" value="1"/>
</dbReference>
<dbReference type="PIRSF" id="PIRSF037565">
    <property type="entry name" value="RRNA_m2G_Mtase_RsmD_prd"/>
    <property type="match status" value="1"/>
</dbReference>
<dbReference type="SUPFAM" id="SSF53335">
    <property type="entry name" value="S-adenosyl-L-methionine-dependent methyltransferases"/>
    <property type="match status" value="1"/>
</dbReference>
<feature type="chain" id="PRO_0000366513" description="Ribosomal RNA large subunit methyltransferase G">
    <location>
        <begin position="1"/>
        <end position="413"/>
    </location>
</feature>
<feature type="region of interest" description="Disordered" evidence="2">
    <location>
        <begin position="389"/>
        <end position="413"/>
    </location>
</feature>
<name>RLMG_SHEPA</name>